<feature type="chain" id="PRO_0000032172" description="Trypsin inhibitor small chain">
    <location>
        <begin position="1"/>
        <end position="39"/>
    </location>
</feature>
<feature type="chain" id="PRO_0000032173" description="Trypsin inhibitor large chain">
    <location>
        <begin position="40"/>
        <end position="130"/>
    </location>
</feature>
<feature type="region of interest" description="Disordered" evidence="1">
    <location>
        <begin position="27"/>
        <end position="49"/>
    </location>
</feature>
<feature type="compositionally biased region" description="Low complexity" evidence="1">
    <location>
        <begin position="32"/>
        <end position="49"/>
    </location>
</feature>
<feature type="sequence variant">
    <original>R</original>
    <variation>M</variation>
    <location>
        <position position="32"/>
    </location>
</feature>
<feature type="sequence variant" description="In form II.">
    <location>
        <begin position="53"/>
        <end position="57"/>
    </location>
</feature>
<feature type="sequence variant">
    <original>A</original>
    <variation>S</variation>
    <location>
        <position position="73"/>
    </location>
</feature>
<feature type="sequence variant">
    <original>K</original>
    <variation>R</variation>
    <location>
        <position position="77"/>
    </location>
</feature>
<feature type="sequence variant">
    <original>Q</original>
    <variation>R</variation>
    <location>
        <position position="81"/>
    </location>
</feature>
<feature type="sequence variant">
    <original>H</original>
    <variation>Q</variation>
    <location>
        <position position="87"/>
    </location>
</feature>
<feature type="sequence variant">
    <original>Q</original>
    <variation>H</variation>
    <location>
        <position position="89"/>
    </location>
</feature>
<feature type="sequence variant">
    <original>G</original>
    <variation>Q</variation>
    <location>
        <position position="91"/>
    </location>
</feature>
<feature type="sequence variant">
    <original>E</original>
    <variation>M</variation>
    <location>
        <position position="97"/>
    </location>
</feature>
<feature type="sequence variant">
    <original>I</original>
    <variation>V</variation>
    <location>
        <position position="98"/>
    </location>
</feature>
<feature type="sequence variant">
    <original>R</original>
    <variation>S</variation>
    <location>
        <position position="99"/>
    </location>
</feature>
<feature type="sequence variant">
    <original>T</original>
    <variation>K</variation>
    <location>
        <position position="106"/>
    </location>
</feature>
<feature type="sequence variant">
    <original>N</original>
    <variation>Q</variation>
    <location>
        <position position="123"/>
    </location>
</feature>
<feature type="sequence variant">
    <original>K</original>
    <variation>G</variation>
    <location>
        <position position="124"/>
    </location>
</feature>
<feature type="sequence variant">
    <original>M</original>
    <variation>V</variation>
    <location>
        <position position="126"/>
    </location>
</feature>
<feature type="non-consecutive residues" evidence="2">
    <location>
        <begin position="39"/>
        <end position="40"/>
    </location>
</feature>
<organism>
    <name type="scientific">Mutarda arvensis</name>
    <name type="common">Charlock mustard</name>
    <name type="synonym">Sinapis arvensis</name>
    <dbReference type="NCBI Taxonomy" id="2982281"/>
    <lineage>
        <taxon>Eukaryota</taxon>
        <taxon>Viridiplantae</taxon>
        <taxon>Streptophyta</taxon>
        <taxon>Embryophyta</taxon>
        <taxon>Tracheophyta</taxon>
        <taxon>Spermatophyta</taxon>
        <taxon>Magnoliopsida</taxon>
        <taxon>eudicotyledons</taxon>
        <taxon>Gunneridae</taxon>
        <taxon>Pentapetalae</taxon>
        <taxon>rosids</taxon>
        <taxon>malvids</taxon>
        <taxon>Brassicales</taxon>
        <taxon>Brassicaceae</taxon>
        <taxon>Brassiceae</taxon>
        <taxon>Mutarda</taxon>
    </lineage>
</organism>
<comment type="function">
    <text>Inhibits trypsin with a Ki of 7 x 10(-6) M.</text>
</comment>
<comment type="subunit">
    <text>The protein consists of two chains linked by disulfide bonds.</text>
</comment>
<comment type="similarity">
    <text evidence="2">Belongs to the 2S seed storage albumins family.</text>
</comment>
<proteinExistence type="evidence at protein level"/>
<evidence type="ECO:0000256" key="1">
    <source>
        <dbReference type="SAM" id="MobiDB-lite"/>
    </source>
</evidence>
<evidence type="ECO:0000305" key="2"/>
<dbReference type="SMR" id="P38057"/>
<dbReference type="GO" id="GO:0045735">
    <property type="term" value="F:nutrient reservoir activity"/>
    <property type="evidence" value="ECO:0007669"/>
    <property type="project" value="UniProtKB-KW"/>
</dbReference>
<dbReference type="CDD" id="cd00261">
    <property type="entry name" value="AAI_SS"/>
    <property type="match status" value="1"/>
</dbReference>
<dbReference type="Gene3D" id="1.10.110.10">
    <property type="entry name" value="Plant lipid-transfer and hydrophobic proteins"/>
    <property type="match status" value="1"/>
</dbReference>
<dbReference type="InterPro" id="IPR036312">
    <property type="entry name" value="Bifun_inhib/LTP/seed_sf"/>
</dbReference>
<dbReference type="InterPro" id="IPR016140">
    <property type="entry name" value="Bifunc_inhib/LTP/seed_store"/>
</dbReference>
<dbReference type="InterPro" id="IPR000617">
    <property type="entry name" value="Napin/2SS/CON"/>
</dbReference>
<dbReference type="PANTHER" id="PTHR35496">
    <property type="entry name" value="2S SEED STORAGE PROTEIN 1-RELATED"/>
    <property type="match status" value="1"/>
</dbReference>
<dbReference type="PANTHER" id="PTHR35496:SF20">
    <property type="entry name" value="2S SEED STORAGE PROTEIN 1-RELATED"/>
    <property type="match status" value="1"/>
</dbReference>
<dbReference type="Pfam" id="PF00234">
    <property type="entry name" value="Tryp_alpha_amyl"/>
    <property type="match status" value="1"/>
</dbReference>
<dbReference type="PRINTS" id="PR00496">
    <property type="entry name" value="NAPIN"/>
</dbReference>
<dbReference type="SMART" id="SM00499">
    <property type="entry name" value="AAI"/>
    <property type="match status" value="1"/>
</dbReference>
<dbReference type="SUPFAM" id="SSF47699">
    <property type="entry name" value="Bifunctional inhibitor/lipid-transfer protein/seed storage 2S albumin"/>
    <property type="match status" value="1"/>
</dbReference>
<reference key="1">
    <citation type="journal article" date="1994" name="Int. J. Pept. Protein Res.">
        <title>Primary structure, spectroscopic and inhibitory properties of a two-chain trypsin inhibitor from the seeds of charlock (Sinapis arvensis L), a member of the napin protein family.</title>
        <authorList>
            <person name="Svendsen I.B."/>
            <person name="Nicolova D."/>
            <person name="Goshev I."/>
            <person name="Genov N."/>
        </authorList>
    </citation>
    <scope>PROTEIN SEQUENCE</scope>
    <source>
        <tissue>Seed</tissue>
    </source>
</reference>
<protein>
    <recommendedName>
        <fullName>Trypsin inhibitor</fullName>
    </recommendedName>
    <alternativeName>
        <fullName>TISA</fullName>
    </alternativeName>
    <component>
        <recommendedName>
            <fullName>Trypsin inhibitor small chain</fullName>
        </recommendedName>
    </component>
    <component>
        <recommendedName>
            <fullName>Trypsin inhibitor large chain</fullName>
        </recommendedName>
    </component>
</protein>
<name>ITRY_MUTAR</name>
<keyword id="KW-0903">Direct protein sequencing</keyword>
<keyword id="KW-1015">Disulfide bond</keyword>
<keyword id="KW-0708">Seed storage protein</keyword>
<keyword id="KW-0758">Storage protein</keyword>
<accession>P38057</accession>
<sequence length="130" mass="14682">PAGPFRLPRCRKEFQQAQHLRACQQWLHKQARQSGSGPSPQGPQQRPPLLQQCCNELHQEEPLCVCPTLKGAAKAVKQQIQQQGQQHGQQGQQLQHEIRRIYQTATHLPKVCNIPQVQVCPFNKTMPGPS</sequence>